<name>CE087_XENLA</name>
<organism>
    <name type="scientific">Xenopus laevis</name>
    <name type="common">African clawed frog</name>
    <dbReference type="NCBI Taxonomy" id="8355"/>
    <lineage>
        <taxon>Eukaryota</taxon>
        <taxon>Metazoa</taxon>
        <taxon>Chordata</taxon>
        <taxon>Craniata</taxon>
        <taxon>Vertebrata</taxon>
        <taxon>Euteleostomi</taxon>
        <taxon>Amphibia</taxon>
        <taxon>Batrachia</taxon>
        <taxon>Anura</taxon>
        <taxon>Pipoidea</taxon>
        <taxon>Pipidae</taxon>
        <taxon>Xenopodinae</taxon>
        <taxon>Xenopus</taxon>
        <taxon>Xenopus</taxon>
    </lineage>
</organism>
<proteinExistence type="evidence at transcript level"/>
<sequence length="144" mass="16750">MATKSCPQCDQQVPVACKSCPCGYIFISRKLLHAKQSQRLPPTSENRSDPKRRRTERIKRERIHTAVNRDLENRKRSRSNSQSEASRRGRGRPKTATTKKHEEEKEKQEKEVDMYANLSDEKAFVFSVALAEINRKIINQRLIL</sequence>
<keyword id="KW-0175">Coiled coil</keyword>
<keyword id="KW-1185">Reference proteome</keyword>
<accession>Q5XG50</accession>
<feature type="chain" id="PRO_0000326524" description="UPF0547 protein C16orf87 homolog">
    <location>
        <begin position="1"/>
        <end position="144"/>
    </location>
</feature>
<feature type="region of interest" description="Disordered" evidence="2">
    <location>
        <begin position="33"/>
        <end position="112"/>
    </location>
</feature>
<feature type="coiled-coil region" evidence="1">
    <location>
        <begin position="94"/>
        <end position="122"/>
    </location>
</feature>
<feature type="compositionally biased region" description="Polar residues" evidence="2">
    <location>
        <begin position="35"/>
        <end position="45"/>
    </location>
</feature>
<feature type="compositionally biased region" description="Basic residues" evidence="2">
    <location>
        <begin position="50"/>
        <end position="62"/>
    </location>
</feature>
<feature type="compositionally biased region" description="Basic and acidic residues" evidence="2">
    <location>
        <begin position="63"/>
        <end position="74"/>
    </location>
</feature>
<feature type="compositionally biased region" description="Basic and acidic residues" evidence="2">
    <location>
        <begin position="99"/>
        <end position="112"/>
    </location>
</feature>
<protein>
    <recommendedName>
        <fullName>UPF0547 protein C16orf87 homolog</fullName>
    </recommendedName>
</protein>
<evidence type="ECO:0000255" key="1"/>
<evidence type="ECO:0000256" key="2">
    <source>
        <dbReference type="SAM" id="MobiDB-lite"/>
    </source>
</evidence>
<evidence type="ECO:0000305" key="3"/>
<comment type="similarity">
    <text evidence="3">Belongs to the UPF0547 family.</text>
</comment>
<dbReference type="EMBL" id="BC084615">
    <property type="protein sequence ID" value="AAH84615.1"/>
    <property type="molecule type" value="mRNA"/>
</dbReference>
<dbReference type="RefSeq" id="NP_001088366.1">
    <property type="nucleotide sequence ID" value="NM_001094897.2"/>
</dbReference>
<dbReference type="DNASU" id="495213"/>
<dbReference type="GeneID" id="495213"/>
<dbReference type="KEGG" id="xla:495213"/>
<dbReference type="AGR" id="Xenbase:XB-GENE-998363"/>
<dbReference type="CTD" id="495213"/>
<dbReference type="OrthoDB" id="5981040at2759"/>
<dbReference type="Proteomes" id="UP000186698">
    <property type="component" value="Chromosome 4L"/>
</dbReference>
<dbReference type="Bgee" id="495213">
    <property type="expression patterns" value="Expressed in oocyte and 19 other cell types or tissues"/>
</dbReference>
<dbReference type="InterPro" id="IPR040246">
    <property type="entry name" value="C16orf87-like"/>
</dbReference>
<dbReference type="InterPro" id="IPR018886">
    <property type="entry name" value="UPF0547"/>
</dbReference>
<dbReference type="PANTHER" id="PTHR31101">
    <property type="entry name" value="UPF0547 PROTEIN C16ORF87"/>
    <property type="match status" value="1"/>
</dbReference>
<dbReference type="Pfam" id="PF10571">
    <property type="entry name" value="UPF0547"/>
    <property type="match status" value="1"/>
</dbReference>
<reference key="1">
    <citation type="submission" date="2004-10" db="EMBL/GenBank/DDBJ databases">
        <authorList>
            <consortium name="NIH - Xenopus Gene Collection (XGC) project"/>
        </authorList>
    </citation>
    <scope>NUCLEOTIDE SEQUENCE [LARGE SCALE MRNA]</scope>
    <source>
        <tissue>Embryo</tissue>
    </source>
</reference>